<sequence>MKVDLNSDLGESFGRYKLGLDEEVMKYITSANVATGWHAGDPLVMRKTVRLAKEKGVAVGAHPGYPDLLGFGRRYMKLTPEEARNYILYQIGALHAFTKAEGMELQHVKPHGALYNALVKDEELARAVIEGITDFDRRIIFVMLSGSRPAEIAEEMGLKVAHEVFADRAYNPDGTLVLRGKPGAVIHDKELIAERVVSMVKDGGVKAINGEWIELRADTICVHGDNPKAVEIAAYIRRVLEDEGINVVPMGEFIR</sequence>
<gene>
    <name evidence="1" type="primary">pxpA</name>
    <name type="ordered locus">TON_1051</name>
</gene>
<feature type="chain" id="PRO_1000132078" description="5-oxoprolinase subunit A">
    <location>
        <begin position="1"/>
        <end position="255"/>
    </location>
</feature>
<proteinExistence type="inferred from homology"/>
<protein>
    <recommendedName>
        <fullName evidence="1">5-oxoprolinase subunit A</fullName>
        <shortName evidence="1">5-OPase subunit A</shortName>
        <ecNumber evidence="1">3.5.2.9</ecNumber>
    </recommendedName>
    <alternativeName>
        <fullName evidence="1">5-oxoprolinase (ATP-hydrolyzing) subunit A</fullName>
    </alternativeName>
</protein>
<name>PXPA_THEON</name>
<organism>
    <name type="scientific">Thermococcus onnurineus (strain NA1)</name>
    <dbReference type="NCBI Taxonomy" id="523850"/>
    <lineage>
        <taxon>Archaea</taxon>
        <taxon>Methanobacteriati</taxon>
        <taxon>Methanobacteriota</taxon>
        <taxon>Thermococci</taxon>
        <taxon>Thermococcales</taxon>
        <taxon>Thermococcaceae</taxon>
        <taxon>Thermococcus</taxon>
    </lineage>
</organism>
<accession>B6YWS6</accession>
<comment type="function">
    <text evidence="1">Catalyzes the cleavage of 5-oxoproline to form L-glutamate coupled to the hydrolysis of ATP to ADP and inorganic phosphate.</text>
</comment>
<comment type="catalytic activity">
    <reaction evidence="1">
        <text>5-oxo-L-proline + ATP + 2 H2O = L-glutamate + ADP + phosphate + H(+)</text>
        <dbReference type="Rhea" id="RHEA:10348"/>
        <dbReference type="ChEBI" id="CHEBI:15377"/>
        <dbReference type="ChEBI" id="CHEBI:15378"/>
        <dbReference type="ChEBI" id="CHEBI:29985"/>
        <dbReference type="ChEBI" id="CHEBI:30616"/>
        <dbReference type="ChEBI" id="CHEBI:43474"/>
        <dbReference type="ChEBI" id="CHEBI:58402"/>
        <dbReference type="ChEBI" id="CHEBI:456216"/>
        <dbReference type="EC" id="3.5.2.9"/>
    </reaction>
</comment>
<comment type="subunit">
    <text evidence="1">Forms a complex composed of PxpA, PxpB and PxpC.</text>
</comment>
<comment type="similarity">
    <text evidence="1">Belongs to the LamB/PxpA family.</text>
</comment>
<dbReference type="EC" id="3.5.2.9" evidence="1"/>
<dbReference type="EMBL" id="CP000855">
    <property type="protein sequence ID" value="ACJ16539.1"/>
    <property type="molecule type" value="Genomic_DNA"/>
</dbReference>
<dbReference type="RefSeq" id="WP_012572011.1">
    <property type="nucleotide sequence ID" value="NC_011529.1"/>
</dbReference>
<dbReference type="SMR" id="B6YWS6"/>
<dbReference type="STRING" id="523850.TON_1051"/>
<dbReference type="GeneID" id="7018073"/>
<dbReference type="KEGG" id="ton:TON_1051"/>
<dbReference type="PATRIC" id="fig|523850.10.peg.1059"/>
<dbReference type="eggNOG" id="arCOG05810">
    <property type="taxonomic scope" value="Archaea"/>
</dbReference>
<dbReference type="HOGENOM" id="CLU_069535_0_0_2"/>
<dbReference type="OrthoDB" id="84497at2157"/>
<dbReference type="Proteomes" id="UP000002727">
    <property type="component" value="Chromosome"/>
</dbReference>
<dbReference type="GO" id="GO:0017168">
    <property type="term" value="F:5-oxoprolinase (ATP-hydrolyzing) activity"/>
    <property type="evidence" value="ECO:0007669"/>
    <property type="project" value="UniProtKB-UniRule"/>
</dbReference>
<dbReference type="GO" id="GO:0005524">
    <property type="term" value="F:ATP binding"/>
    <property type="evidence" value="ECO:0007669"/>
    <property type="project" value="UniProtKB-UniRule"/>
</dbReference>
<dbReference type="GO" id="GO:0005975">
    <property type="term" value="P:carbohydrate metabolic process"/>
    <property type="evidence" value="ECO:0007669"/>
    <property type="project" value="InterPro"/>
</dbReference>
<dbReference type="CDD" id="cd10787">
    <property type="entry name" value="LamB_YcsF_like"/>
    <property type="match status" value="1"/>
</dbReference>
<dbReference type="Gene3D" id="3.20.20.370">
    <property type="entry name" value="Glycoside hydrolase/deacetylase"/>
    <property type="match status" value="1"/>
</dbReference>
<dbReference type="HAMAP" id="MF_00691">
    <property type="entry name" value="PxpA"/>
    <property type="match status" value="1"/>
</dbReference>
<dbReference type="InterPro" id="IPR011330">
    <property type="entry name" value="Glyco_hydro/deAcase_b/a-brl"/>
</dbReference>
<dbReference type="InterPro" id="IPR005501">
    <property type="entry name" value="LamB/YcsF/PxpA-like"/>
</dbReference>
<dbReference type="NCBIfam" id="NF003814">
    <property type="entry name" value="PRK05406.1-3"/>
    <property type="match status" value="1"/>
</dbReference>
<dbReference type="NCBIfam" id="NF003816">
    <property type="entry name" value="PRK05406.1-5"/>
    <property type="match status" value="1"/>
</dbReference>
<dbReference type="PANTHER" id="PTHR30292:SF0">
    <property type="entry name" value="5-OXOPROLINASE SUBUNIT A"/>
    <property type="match status" value="1"/>
</dbReference>
<dbReference type="PANTHER" id="PTHR30292">
    <property type="entry name" value="UNCHARACTERIZED PROTEIN YBGL-RELATED"/>
    <property type="match status" value="1"/>
</dbReference>
<dbReference type="Pfam" id="PF03746">
    <property type="entry name" value="LamB_YcsF"/>
    <property type="match status" value="1"/>
</dbReference>
<dbReference type="SUPFAM" id="SSF88713">
    <property type="entry name" value="Glycoside hydrolase/deacetylase"/>
    <property type="match status" value="1"/>
</dbReference>
<reference key="1">
    <citation type="journal article" date="2008" name="J. Bacteriol.">
        <title>The complete genome sequence of Thermococcus onnurineus NA1 reveals a mixed heterotrophic and carboxydotrophic metabolism.</title>
        <authorList>
            <person name="Lee H.S."/>
            <person name="Kang S.G."/>
            <person name="Bae S.S."/>
            <person name="Lim J.K."/>
            <person name="Cho Y."/>
            <person name="Kim Y.J."/>
            <person name="Jeon J.H."/>
            <person name="Cha S.-S."/>
            <person name="Kwon K.K."/>
            <person name="Kim H.-T."/>
            <person name="Park C.-J."/>
            <person name="Lee H.-W."/>
            <person name="Kim S.I."/>
            <person name="Chun J."/>
            <person name="Colwell R.R."/>
            <person name="Kim S.-J."/>
            <person name="Lee J.-H."/>
        </authorList>
    </citation>
    <scope>NUCLEOTIDE SEQUENCE [LARGE SCALE GENOMIC DNA]</scope>
    <source>
        <strain>NA1</strain>
    </source>
</reference>
<evidence type="ECO:0000255" key="1">
    <source>
        <dbReference type="HAMAP-Rule" id="MF_00691"/>
    </source>
</evidence>
<keyword id="KW-0067">ATP-binding</keyword>
<keyword id="KW-0378">Hydrolase</keyword>
<keyword id="KW-0547">Nucleotide-binding</keyword>